<protein>
    <recommendedName>
        <fullName evidence="1">Lactate utilization protein A</fullName>
    </recommendedName>
</protein>
<reference key="1">
    <citation type="submission" date="2008-10" db="EMBL/GenBank/DDBJ databases">
        <title>Genome sequence of Bacillus cereus G9842.</title>
        <authorList>
            <person name="Dodson R.J."/>
            <person name="Durkin A.S."/>
            <person name="Rosovitz M.J."/>
            <person name="Rasko D.A."/>
            <person name="Hoffmaster A."/>
            <person name="Ravel J."/>
            <person name="Sutton G."/>
        </authorList>
    </citation>
    <scope>NUCLEOTIDE SEQUENCE [LARGE SCALE GENOMIC DNA]</scope>
    <source>
        <strain>G9842</strain>
    </source>
</reference>
<proteinExistence type="inferred from homology"/>
<dbReference type="EMBL" id="CP001186">
    <property type="protein sequence ID" value="ACK93645.1"/>
    <property type="molecule type" value="Genomic_DNA"/>
</dbReference>
<dbReference type="RefSeq" id="WP_000869152.1">
    <property type="nucleotide sequence ID" value="NC_011772.1"/>
</dbReference>
<dbReference type="SMR" id="B7IMD3"/>
<dbReference type="KEGG" id="bcg:BCG9842_B3990"/>
<dbReference type="HOGENOM" id="CLU_023081_1_0_9"/>
<dbReference type="Proteomes" id="UP000006744">
    <property type="component" value="Chromosome"/>
</dbReference>
<dbReference type="GO" id="GO:0005829">
    <property type="term" value="C:cytosol"/>
    <property type="evidence" value="ECO:0007669"/>
    <property type="project" value="TreeGrafter"/>
</dbReference>
<dbReference type="GO" id="GO:0016491">
    <property type="term" value="F:oxidoreductase activity"/>
    <property type="evidence" value="ECO:0007669"/>
    <property type="project" value="UniProtKB-ARBA"/>
</dbReference>
<dbReference type="GO" id="GO:0006089">
    <property type="term" value="P:lactate metabolic process"/>
    <property type="evidence" value="ECO:0007669"/>
    <property type="project" value="UniProtKB-UniRule"/>
</dbReference>
<dbReference type="HAMAP" id="MF_02105">
    <property type="entry name" value="LutA"/>
    <property type="match status" value="1"/>
</dbReference>
<dbReference type="InterPro" id="IPR004017">
    <property type="entry name" value="Cys_rich_dom"/>
</dbReference>
<dbReference type="InterPro" id="IPR022822">
    <property type="entry name" value="LutA"/>
</dbReference>
<dbReference type="PANTHER" id="PTHR30296:SF0">
    <property type="entry name" value="LACTATE UTILIZATION PROTEIN A"/>
    <property type="match status" value="1"/>
</dbReference>
<dbReference type="PANTHER" id="PTHR30296">
    <property type="entry name" value="UNCHARACTERIZED PROTEIN YKGE"/>
    <property type="match status" value="1"/>
</dbReference>
<dbReference type="Pfam" id="PF02754">
    <property type="entry name" value="CCG"/>
    <property type="match status" value="2"/>
</dbReference>
<organism>
    <name type="scientific">Bacillus cereus (strain G9842)</name>
    <dbReference type="NCBI Taxonomy" id="405531"/>
    <lineage>
        <taxon>Bacteria</taxon>
        <taxon>Bacillati</taxon>
        <taxon>Bacillota</taxon>
        <taxon>Bacilli</taxon>
        <taxon>Bacillales</taxon>
        <taxon>Bacillaceae</taxon>
        <taxon>Bacillus</taxon>
        <taxon>Bacillus cereus group</taxon>
    </lineage>
</organism>
<name>LUTA_BACC2</name>
<sequence length="239" mass="26207">MKVTLFVTCLVDMFETNVGKATVEVLERLGCEIEFPEAQVCCGQPAYNSGHVEAAKEAMKHMIETFEDAEYIVTPSGSCATMFHEYPHVFKDDPKWAKRAQKVADKTYEFTQFIVDVLKVTDVGASLSGIATIHKSCHMTRMLGVKEAPGILLSNVKGLTVRDLPNVQNCCGFGGTFSVKMTPISEQMVDEKVDSVMETGADYLIGADCGCLLNIGGRIERLGKEVKVMHIAEVLNSRS</sequence>
<evidence type="ECO:0000255" key="1">
    <source>
        <dbReference type="HAMAP-Rule" id="MF_02105"/>
    </source>
</evidence>
<gene>
    <name evidence="1" type="primary">lutA</name>
    <name type="ordered locus">BCG9842_B3990</name>
</gene>
<accession>B7IMD3</accession>
<comment type="function">
    <text evidence="1">Is involved in L-lactate degradation and allows cells to grow with lactate as the sole carbon source.</text>
</comment>
<comment type="similarity">
    <text evidence="1">Belongs to the LutA/YkgE family.</text>
</comment>
<feature type="chain" id="PRO_0000384028" description="Lactate utilization protein A">
    <location>
        <begin position="1"/>
        <end position="239"/>
    </location>
</feature>